<name>RL25_BARHE</name>
<keyword id="KW-0687">Ribonucleoprotein</keyword>
<keyword id="KW-0689">Ribosomal protein</keyword>
<keyword id="KW-0694">RNA-binding</keyword>
<keyword id="KW-0699">rRNA-binding</keyword>
<gene>
    <name evidence="1" type="primary">rplY</name>
    <name evidence="1" type="synonym">ctc</name>
    <name type="ordered locus">BH11850</name>
</gene>
<accession>Q6G2L2</accession>
<sequence length="206" mass="22751">MSKSYTLKAEIRERVGKGSSRELRRNGLIPAVIYGDKQPPLAIAVSYKDIFYKIHAGGFRTTVATLAIDKQKIMVLPKDYQLDPVRDFPLHVDFLRISAKSIVEVNIPVHFLNEDSAPGLKKGGVLNIVRHEIECTAPANAIPEAIEIDLSSYSIGDSIHISAVQLPKDVNPVIQDRDFTIATIVAPADMDVSDEVSEQENNEESE</sequence>
<evidence type="ECO:0000255" key="1">
    <source>
        <dbReference type="HAMAP-Rule" id="MF_01334"/>
    </source>
</evidence>
<evidence type="ECO:0000305" key="2"/>
<protein>
    <recommendedName>
        <fullName evidence="1">Large ribosomal subunit protein bL25</fullName>
    </recommendedName>
    <alternativeName>
        <fullName evidence="2">50S ribosomal protein L25</fullName>
    </alternativeName>
    <alternativeName>
        <fullName evidence="1">General stress protein CTC</fullName>
    </alternativeName>
</protein>
<comment type="function">
    <text evidence="1">This is one of the proteins that binds to the 5S RNA in the ribosome where it forms part of the central protuberance.</text>
</comment>
<comment type="subunit">
    <text evidence="1">Part of the 50S ribosomal subunit; part of the 5S rRNA/L5/L18/L25 subcomplex. Contacts the 5S rRNA. Binds to the 5S rRNA independently of L5 and L18.</text>
</comment>
<comment type="similarity">
    <text evidence="1">Belongs to the bacterial ribosomal protein bL25 family. CTC subfamily.</text>
</comment>
<reference key="1">
    <citation type="journal article" date="2004" name="Proc. Natl. Acad. Sci. U.S.A.">
        <title>The louse-borne human pathogen Bartonella quintana is a genomic derivative of the zoonotic agent Bartonella henselae.</title>
        <authorList>
            <person name="Alsmark U.C.M."/>
            <person name="Frank A.C."/>
            <person name="Karlberg E.O."/>
            <person name="Legault B.-A."/>
            <person name="Ardell D.H."/>
            <person name="Canbaeck B."/>
            <person name="Eriksson A.-S."/>
            <person name="Naeslund A.K."/>
            <person name="Handley S.A."/>
            <person name="Huvet M."/>
            <person name="La Scola B."/>
            <person name="Holmberg M."/>
            <person name="Andersson S.G.E."/>
        </authorList>
    </citation>
    <scope>NUCLEOTIDE SEQUENCE [LARGE SCALE GENOMIC DNA]</scope>
    <source>
        <strain>ATCC 49882 / DSM 28221 / CCUG 30454 / Houston 1</strain>
    </source>
</reference>
<dbReference type="EMBL" id="BX897699">
    <property type="protein sequence ID" value="CAF27968.1"/>
    <property type="molecule type" value="Genomic_DNA"/>
</dbReference>
<dbReference type="RefSeq" id="WP_011181025.1">
    <property type="nucleotide sequence ID" value="NZ_LRIJ02000001.1"/>
</dbReference>
<dbReference type="SMR" id="Q6G2L2"/>
<dbReference type="PaxDb" id="283166-BH11850"/>
<dbReference type="EnsemblBacteria" id="CAF27968">
    <property type="protein sequence ID" value="CAF27968"/>
    <property type="gene ID" value="BH11850"/>
</dbReference>
<dbReference type="KEGG" id="bhe:BH11850"/>
<dbReference type="eggNOG" id="COG1825">
    <property type="taxonomic scope" value="Bacteria"/>
</dbReference>
<dbReference type="OrthoDB" id="9806411at2"/>
<dbReference type="Proteomes" id="UP000000421">
    <property type="component" value="Chromosome"/>
</dbReference>
<dbReference type="GO" id="GO:0022625">
    <property type="term" value="C:cytosolic large ribosomal subunit"/>
    <property type="evidence" value="ECO:0007669"/>
    <property type="project" value="TreeGrafter"/>
</dbReference>
<dbReference type="GO" id="GO:0008097">
    <property type="term" value="F:5S rRNA binding"/>
    <property type="evidence" value="ECO:0007669"/>
    <property type="project" value="InterPro"/>
</dbReference>
<dbReference type="GO" id="GO:0003735">
    <property type="term" value="F:structural constituent of ribosome"/>
    <property type="evidence" value="ECO:0007669"/>
    <property type="project" value="InterPro"/>
</dbReference>
<dbReference type="GO" id="GO:0006412">
    <property type="term" value="P:translation"/>
    <property type="evidence" value="ECO:0007669"/>
    <property type="project" value="UniProtKB-UniRule"/>
</dbReference>
<dbReference type="CDD" id="cd00495">
    <property type="entry name" value="Ribosomal_L25_TL5_CTC"/>
    <property type="match status" value="1"/>
</dbReference>
<dbReference type="Gene3D" id="2.170.120.20">
    <property type="entry name" value="Ribosomal protein L25, beta domain"/>
    <property type="match status" value="1"/>
</dbReference>
<dbReference type="Gene3D" id="2.40.240.10">
    <property type="entry name" value="Ribosomal Protein L25, Chain P"/>
    <property type="match status" value="1"/>
</dbReference>
<dbReference type="HAMAP" id="MF_01334">
    <property type="entry name" value="Ribosomal_bL25_CTC"/>
    <property type="match status" value="1"/>
</dbReference>
<dbReference type="InterPro" id="IPR020056">
    <property type="entry name" value="Rbsml_bL25/Gln-tRNA_synth_N"/>
</dbReference>
<dbReference type="InterPro" id="IPR011035">
    <property type="entry name" value="Ribosomal_bL25/Gln-tRNA_synth"/>
</dbReference>
<dbReference type="InterPro" id="IPR020057">
    <property type="entry name" value="Ribosomal_bL25_b-dom"/>
</dbReference>
<dbReference type="InterPro" id="IPR037121">
    <property type="entry name" value="Ribosomal_bL25_C"/>
</dbReference>
<dbReference type="InterPro" id="IPR001021">
    <property type="entry name" value="Ribosomal_bL25_long"/>
</dbReference>
<dbReference type="InterPro" id="IPR029751">
    <property type="entry name" value="Ribosomal_L25_dom"/>
</dbReference>
<dbReference type="InterPro" id="IPR020930">
    <property type="entry name" value="Ribosomal_uL5_bac-type"/>
</dbReference>
<dbReference type="NCBIfam" id="TIGR00731">
    <property type="entry name" value="bL25_bact_ctc"/>
    <property type="match status" value="1"/>
</dbReference>
<dbReference type="NCBIfam" id="NF004128">
    <property type="entry name" value="PRK05618.1-2"/>
    <property type="match status" value="1"/>
</dbReference>
<dbReference type="NCBIfam" id="NF004612">
    <property type="entry name" value="PRK05943.1"/>
    <property type="match status" value="1"/>
</dbReference>
<dbReference type="PANTHER" id="PTHR33284">
    <property type="entry name" value="RIBOSOMAL PROTEIN L25/GLN-TRNA SYNTHETASE, ANTI-CODON-BINDING DOMAIN-CONTAINING PROTEIN"/>
    <property type="match status" value="1"/>
</dbReference>
<dbReference type="PANTHER" id="PTHR33284:SF1">
    <property type="entry name" value="RIBOSOMAL PROTEIN L25_GLN-TRNA SYNTHETASE, ANTI-CODON-BINDING DOMAIN-CONTAINING PROTEIN"/>
    <property type="match status" value="1"/>
</dbReference>
<dbReference type="Pfam" id="PF01386">
    <property type="entry name" value="Ribosomal_L25p"/>
    <property type="match status" value="1"/>
</dbReference>
<dbReference type="Pfam" id="PF14693">
    <property type="entry name" value="Ribosomal_TL5_C"/>
    <property type="match status" value="1"/>
</dbReference>
<dbReference type="SUPFAM" id="SSF50715">
    <property type="entry name" value="Ribosomal protein L25-like"/>
    <property type="match status" value="1"/>
</dbReference>
<organism>
    <name type="scientific">Bartonella henselae (strain ATCC 49882 / DSM 28221 / CCUG 30454 / Houston 1)</name>
    <name type="common">Rochalimaea henselae</name>
    <dbReference type="NCBI Taxonomy" id="283166"/>
    <lineage>
        <taxon>Bacteria</taxon>
        <taxon>Pseudomonadati</taxon>
        <taxon>Pseudomonadota</taxon>
        <taxon>Alphaproteobacteria</taxon>
        <taxon>Hyphomicrobiales</taxon>
        <taxon>Bartonellaceae</taxon>
        <taxon>Bartonella</taxon>
    </lineage>
</organism>
<feature type="chain" id="PRO_0000181514" description="Large ribosomal subunit protein bL25">
    <location>
        <begin position="1"/>
        <end position="206"/>
    </location>
</feature>
<proteinExistence type="inferred from homology"/>